<comment type="function">
    <text evidence="1">Catalyzes the NADPH-dependent reduction of glutamyl-tRNA(Glu) to glutamate 1-semialdehyde (GSA).</text>
</comment>
<comment type="catalytic activity">
    <reaction evidence="1">
        <text>(S)-4-amino-5-oxopentanoate + tRNA(Glu) + NADP(+) = L-glutamyl-tRNA(Glu) + NADPH + H(+)</text>
        <dbReference type="Rhea" id="RHEA:12344"/>
        <dbReference type="Rhea" id="RHEA-COMP:9663"/>
        <dbReference type="Rhea" id="RHEA-COMP:9680"/>
        <dbReference type="ChEBI" id="CHEBI:15378"/>
        <dbReference type="ChEBI" id="CHEBI:57501"/>
        <dbReference type="ChEBI" id="CHEBI:57783"/>
        <dbReference type="ChEBI" id="CHEBI:58349"/>
        <dbReference type="ChEBI" id="CHEBI:78442"/>
        <dbReference type="ChEBI" id="CHEBI:78520"/>
        <dbReference type="EC" id="1.2.1.70"/>
    </reaction>
</comment>
<comment type="pathway">
    <text evidence="1">Porphyrin-containing compound metabolism; protoporphyrin-IX biosynthesis; 5-aminolevulinate from L-glutamyl-tRNA(Glu): step 1/2.</text>
</comment>
<comment type="subunit">
    <text evidence="1">Homodimer.</text>
</comment>
<comment type="domain">
    <text evidence="1">Possesses an unusual extended V-shaped dimeric structure with each monomer consisting of three distinct domains arranged along a curved 'spinal' alpha-helix. The N-terminal catalytic domain specifically recognizes the glutamate moiety of the substrate. The second domain is the NADPH-binding domain, and the third C-terminal domain is responsible for dimerization.</text>
</comment>
<comment type="miscellaneous">
    <text evidence="1">During catalysis, the active site Cys acts as a nucleophile attacking the alpha-carbonyl group of tRNA-bound glutamate with the formation of a thioester intermediate between enzyme and glutamate, and the concomitant release of tRNA(Glu). The thioester intermediate is finally reduced by direct hydride transfer from NADPH, to form the product GSA.</text>
</comment>
<comment type="similarity">
    <text evidence="1">Belongs to the glutamyl-tRNA reductase family.</text>
</comment>
<gene>
    <name evidence="1" type="primary">hemA</name>
    <name type="ordered locus">ECIAI39_1546</name>
</gene>
<evidence type="ECO:0000255" key="1">
    <source>
        <dbReference type="HAMAP-Rule" id="MF_00087"/>
    </source>
</evidence>
<sequence length="418" mass="46317">MTLLALGINHKTAPVSLRERVSFSPDKLDQALDSLLAQPMVQGGVVLSTCNRTELYLSVEERDDLQEALIRWLCDYHNLNEDDLRNSLYWHQDNDAVSHLMRVASGLDSLVLGEPQILGQVKKAFADSQKGHMKASELERMFQKSFSVAKRVRTETDIGASAVSVAFAACTLARQIFESLSTVTVLLVGAGETIELVARHLREHKVQKMIIANRTRERAQILADEVGAEVIALSDIDERLREADIIISSTASPLPIIGKGMVERALKSRRNQPMLLVDIAVPRDVEPEVGKLANAYLYSVDDLQSIISHNLAQRKAAAVEAETIVAQETSEFMAWLRAQSASETIREYRSQAEHVRDELTAKALAALEQGGDAQAIMQDLAWKLTNRLIHAPTKSLQQAARDGDNERLNILRDSLGLE</sequence>
<proteinExistence type="inferred from homology"/>
<accession>B7NUX6</accession>
<reference key="1">
    <citation type="journal article" date="2009" name="PLoS Genet.">
        <title>Organised genome dynamics in the Escherichia coli species results in highly diverse adaptive paths.</title>
        <authorList>
            <person name="Touchon M."/>
            <person name="Hoede C."/>
            <person name="Tenaillon O."/>
            <person name="Barbe V."/>
            <person name="Baeriswyl S."/>
            <person name="Bidet P."/>
            <person name="Bingen E."/>
            <person name="Bonacorsi S."/>
            <person name="Bouchier C."/>
            <person name="Bouvet O."/>
            <person name="Calteau A."/>
            <person name="Chiapello H."/>
            <person name="Clermont O."/>
            <person name="Cruveiller S."/>
            <person name="Danchin A."/>
            <person name="Diard M."/>
            <person name="Dossat C."/>
            <person name="Karoui M.E."/>
            <person name="Frapy E."/>
            <person name="Garry L."/>
            <person name="Ghigo J.M."/>
            <person name="Gilles A.M."/>
            <person name="Johnson J."/>
            <person name="Le Bouguenec C."/>
            <person name="Lescat M."/>
            <person name="Mangenot S."/>
            <person name="Martinez-Jehanne V."/>
            <person name="Matic I."/>
            <person name="Nassif X."/>
            <person name="Oztas S."/>
            <person name="Petit M.A."/>
            <person name="Pichon C."/>
            <person name="Rouy Z."/>
            <person name="Ruf C.S."/>
            <person name="Schneider D."/>
            <person name="Tourret J."/>
            <person name="Vacherie B."/>
            <person name="Vallenet D."/>
            <person name="Medigue C."/>
            <person name="Rocha E.P.C."/>
            <person name="Denamur E."/>
        </authorList>
    </citation>
    <scope>NUCLEOTIDE SEQUENCE [LARGE SCALE GENOMIC DNA]</scope>
    <source>
        <strain>IAI39 / ExPEC</strain>
    </source>
</reference>
<name>HEM1_ECO7I</name>
<keyword id="KW-0521">NADP</keyword>
<keyword id="KW-0560">Oxidoreductase</keyword>
<keyword id="KW-0627">Porphyrin biosynthesis</keyword>
<feature type="chain" id="PRO_1000190526" description="Glutamyl-tRNA reductase">
    <location>
        <begin position="1"/>
        <end position="418"/>
    </location>
</feature>
<feature type="active site" description="Nucleophile" evidence="1">
    <location>
        <position position="50"/>
    </location>
</feature>
<feature type="binding site" evidence="1">
    <location>
        <begin position="49"/>
        <end position="52"/>
    </location>
    <ligand>
        <name>substrate</name>
    </ligand>
</feature>
<feature type="binding site" evidence="1">
    <location>
        <position position="109"/>
    </location>
    <ligand>
        <name>substrate</name>
    </ligand>
</feature>
<feature type="binding site" evidence="1">
    <location>
        <begin position="114"/>
        <end position="116"/>
    </location>
    <ligand>
        <name>substrate</name>
    </ligand>
</feature>
<feature type="binding site" evidence="1">
    <location>
        <position position="120"/>
    </location>
    <ligand>
        <name>substrate</name>
    </ligand>
</feature>
<feature type="binding site" evidence="1">
    <location>
        <begin position="189"/>
        <end position="194"/>
    </location>
    <ligand>
        <name>NADP(+)</name>
        <dbReference type="ChEBI" id="CHEBI:58349"/>
    </ligand>
</feature>
<feature type="site" description="Important for activity" evidence="1">
    <location>
        <position position="99"/>
    </location>
</feature>
<protein>
    <recommendedName>
        <fullName evidence="1">Glutamyl-tRNA reductase</fullName>
        <shortName evidence="1">GluTR</shortName>
        <ecNumber evidence="1">1.2.1.70</ecNumber>
    </recommendedName>
</protein>
<dbReference type="EC" id="1.2.1.70" evidence="1"/>
<dbReference type="EMBL" id="CU928164">
    <property type="protein sequence ID" value="CAR17678.1"/>
    <property type="molecule type" value="Genomic_DNA"/>
</dbReference>
<dbReference type="RefSeq" id="WP_001330437.1">
    <property type="nucleotide sequence ID" value="NC_011750.1"/>
</dbReference>
<dbReference type="RefSeq" id="YP_002407546.1">
    <property type="nucleotide sequence ID" value="NC_011750.1"/>
</dbReference>
<dbReference type="SMR" id="B7NUX6"/>
<dbReference type="STRING" id="585057.ECIAI39_1546"/>
<dbReference type="KEGG" id="ect:ECIAI39_1546"/>
<dbReference type="PATRIC" id="fig|585057.6.peg.1616"/>
<dbReference type="HOGENOM" id="CLU_035113_2_2_6"/>
<dbReference type="UniPathway" id="UPA00251">
    <property type="reaction ID" value="UER00316"/>
</dbReference>
<dbReference type="Proteomes" id="UP000000749">
    <property type="component" value="Chromosome"/>
</dbReference>
<dbReference type="GO" id="GO:0008883">
    <property type="term" value="F:glutamyl-tRNA reductase activity"/>
    <property type="evidence" value="ECO:0007669"/>
    <property type="project" value="UniProtKB-UniRule"/>
</dbReference>
<dbReference type="GO" id="GO:0050661">
    <property type="term" value="F:NADP binding"/>
    <property type="evidence" value="ECO:0007669"/>
    <property type="project" value="InterPro"/>
</dbReference>
<dbReference type="GO" id="GO:0019353">
    <property type="term" value="P:protoporphyrinogen IX biosynthetic process from glutamate"/>
    <property type="evidence" value="ECO:0007669"/>
    <property type="project" value="TreeGrafter"/>
</dbReference>
<dbReference type="CDD" id="cd05213">
    <property type="entry name" value="NAD_bind_Glutamyl_tRNA_reduct"/>
    <property type="match status" value="1"/>
</dbReference>
<dbReference type="FunFam" id="3.30.460.30:FF:000001">
    <property type="entry name" value="Glutamyl-tRNA reductase"/>
    <property type="match status" value="1"/>
</dbReference>
<dbReference type="FunFam" id="3.40.50.720:FF:000031">
    <property type="entry name" value="Glutamyl-tRNA reductase"/>
    <property type="match status" value="1"/>
</dbReference>
<dbReference type="Gene3D" id="3.30.460.30">
    <property type="entry name" value="Glutamyl-tRNA reductase, N-terminal domain"/>
    <property type="match status" value="1"/>
</dbReference>
<dbReference type="Gene3D" id="3.40.50.720">
    <property type="entry name" value="NAD(P)-binding Rossmann-like Domain"/>
    <property type="match status" value="1"/>
</dbReference>
<dbReference type="HAMAP" id="MF_00087">
    <property type="entry name" value="Glu_tRNA_reductase"/>
    <property type="match status" value="1"/>
</dbReference>
<dbReference type="InterPro" id="IPR000343">
    <property type="entry name" value="4pyrrol_synth_GluRdtase"/>
</dbReference>
<dbReference type="InterPro" id="IPR015896">
    <property type="entry name" value="4pyrrol_synth_GluRdtase_dimer"/>
</dbReference>
<dbReference type="InterPro" id="IPR015895">
    <property type="entry name" value="4pyrrol_synth_GluRdtase_N"/>
</dbReference>
<dbReference type="InterPro" id="IPR018214">
    <property type="entry name" value="GluRdtase_CS"/>
</dbReference>
<dbReference type="InterPro" id="IPR036453">
    <property type="entry name" value="GluRdtase_dimer_dom_sf"/>
</dbReference>
<dbReference type="InterPro" id="IPR036343">
    <property type="entry name" value="GluRdtase_N_sf"/>
</dbReference>
<dbReference type="InterPro" id="IPR036291">
    <property type="entry name" value="NAD(P)-bd_dom_sf"/>
</dbReference>
<dbReference type="InterPro" id="IPR006151">
    <property type="entry name" value="Shikm_DH/Glu-tRNA_Rdtase"/>
</dbReference>
<dbReference type="NCBIfam" id="TIGR01035">
    <property type="entry name" value="hemA"/>
    <property type="match status" value="1"/>
</dbReference>
<dbReference type="PANTHER" id="PTHR43013">
    <property type="entry name" value="GLUTAMYL-TRNA REDUCTASE"/>
    <property type="match status" value="1"/>
</dbReference>
<dbReference type="PANTHER" id="PTHR43013:SF1">
    <property type="entry name" value="GLUTAMYL-TRNA REDUCTASE"/>
    <property type="match status" value="1"/>
</dbReference>
<dbReference type="Pfam" id="PF00745">
    <property type="entry name" value="GlutR_dimer"/>
    <property type="match status" value="1"/>
</dbReference>
<dbReference type="Pfam" id="PF05201">
    <property type="entry name" value="GlutR_N"/>
    <property type="match status" value="1"/>
</dbReference>
<dbReference type="Pfam" id="PF01488">
    <property type="entry name" value="Shikimate_DH"/>
    <property type="match status" value="1"/>
</dbReference>
<dbReference type="PIRSF" id="PIRSF000445">
    <property type="entry name" value="4pyrrol_synth_GluRdtase"/>
    <property type="match status" value="1"/>
</dbReference>
<dbReference type="SUPFAM" id="SSF69742">
    <property type="entry name" value="Glutamyl tRNA-reductase catalytic, N-terminal domain"/>
    <property type="match status" value="1"/>
</dbReference>
<dbReference type="SUPFAM" id="SSF69075">
    <property type="entry name" value="Glutamyl tRNA-reductase dimerization domain"/>
    <property type="match status" value="1"/>
</dbReference>
<dbReference type="SUPFAM" id="SSF51735">
    <property type="entry name" value="NAD(P)-binding Rossmann-fold domains"/>
    <property type="match status" value="1"/>
</dbReference>
<dbReference type="PROSITE" id="PS00747">
    <property type="entry name" value="GLUTR"/>
    <property type="match status" value="1"/>
</dbReference>
<organism>
    <name type="scientific">Escherichia coli O7:K1 (strain IAI39 / ExPEC)</name>
    <dbReference type="NCBI Taxonomy" id="585057"/>
    <lineage>
        <taxon>Bacteria</taxon>
        <taxon>Pseudomonadati</taxon>
        <taxon>Pseudomonadota</taxon>
        <taxon>Gammaproteobacteria</taxon>
        <taxon>Enterobacterales</taxon>
        <taxon>Enterobacteriaceae</taxon>
        <taxon>Escherichia</taxon>
    </lineage>
</organism>